<feature type="chain" id="PRO_0000131173" description="Large ribosomal subunit protein eL19">
    <location>
        <begin position="1"/>
        <end position="196"/>
    </location>
</feature>
<feature type="region of interest" description="Disordered" evidence="2">
    <location>
        <begin position="156"/>
        <end position="196"/>
    </location>
</feature>
<feature type="compositionally biased region" description="Basic and acidic residues" evidence="2">
    <location>
        <begin position="159"/>
        <end position="196"/>
    </location>
</feature>
<reference key="1">
    <citation type="journal article" date="2004" name="Proc. Natl. Acad. Sci. U.S.A.">
        <title>Identification of 315 genes essential for early zebrafish development.</title>
        <authorList>
            <person name="Amsterdam A."/>
            <person name="Nissen R.M."/>
            <person name="Sun Z."/>
            <person name="Swindell E.C."/>
            <person name="Farrington S."/>
            <person name="Hopkins N."/>
        </authorList>
    </citation>
    <scope>NUCLEOTIDE SEQUENCE [LARGE SCALE MRNA]</scope>
</reference>
<reference key="2">
    <citation type="submission" date="2003-11" db="EMBL/GenBank/DDBJ databases">
        <authorList>
            <consortium name="NIH - Zebrafish Gene Collection (ZGC) project"/>
        </authorList>
    </citation>
    <scope>NUCLEOTIDE SEQUENCE [LARGE SCALE MRNA]</scope>
</reference>
<keyword id="KW-0002">3D-structure</keyword>
<keyword id="KW-0963">Cytoplasm</keyword>
<keyword id="KW-1185">Reference proteome</keyword>
<keyword id="KW-0687">Ribonucleoprotein</keyword>
<keyword id="KW-0689">Ribosomal protein</keyword>
<comment type="function">
    <text evidence="1">Component of the large ribosomal subunit. The ribosome is a large ribonucleoprotein complex responsible for the synthesis of proteins in the cell.</text>
</comment>
<comment type="subunit">
    <text evidence="1">Component of the large ribosomal subunit.</text>
</comment>
<comment type="subcellular location">
    <subcellularLocation>
        <location evidence="1">Cytoplasm</location>
    </subcellularLocation>
</comment>
<comment type="similarity">
    <text evidence="3">Belongs to the eukaryotic ribosomal protein eL19 family.</text>
</comment>
<gene>
    <name type="primary">rpl19</name>
    <name type="ORF">zgc:77733</name>
</gene>
<proteinExistence type="evidence at protein level"/>
<name>RL19_DANRE</name>
<organism>
    <name type="scientific">Danio rerio</name>
    <name type="common">Zebrafish</name>
    <name type="synonym">Brachydanio rerio</name>
    <dbReference type="NCBI Taxonomy" id="7955"/>
    <lineage>
        <taxon>Eukaryota</taxon>
        <taxon>Metazoa</taxon>
        <taxon>Chordata</taxon>
        <taxon>Craniata</taxon>
        <taxon>Vertebrata</taxon>
        <taxon>Euteleostomi</taxon>
        <taxon>Actinopterygii</taxon>
        <taxon>Neopterygii</taxon>
        <taxon>Teleostei</taxon>
        <taxon>Ostariophysi</taxon>
        <taxon>Cypriniformes</taxon>
        <taxon>Danionidae</taxon>
        <taxon>Danioninae</taxon>
        <taxon>Danio</taxon>
    </lineage>
</organism>
<evidence type="ECO:0000250" key="1">
    <source>
        <dbReference type="UniProtKB" id="P84098"/>
    </source>
</evidence>
<evidence type="ECO:0000256" key="2">
    <source>
        <dbReference type="SAM" id="MobiDB-lite"/>
    </source>
</evidence>
<evidence type="ECO:0000305" key="3"/>
<dbReference type="EMBL" id="AY648758">
    <property type="protein sequence ID" value="AAT68076.1"/>
    <property type="molecule type" value="mRNA"/>
</dbReference>
<dbReference type="EMBL" id="BC062844">
    <property type="protein sequence ID" value="AAH62844.1"/>
    <property type="molecule type" value="mRNA"/>
</dbReference>
<dbReference type="RefSeq" id="NP_998373.1">
    <property type="nucleotide sequence ID" value="NM_213208.1"/>
</dbReference>
<dbReference type="PDB" id="7OYA">
    <property type="method" value="EM"/>
    <property type="resolution" value="3.20 A"/>
    <property type="chains" value="R1=1-196"/>
</dbReference>
<dbReference type="PDB" id="7OYB">
    <property type="method" value="EM"/>
    <property type="resolution" value="2.40 A"/>
    <property type="chains" value="R1=1-196"/>
</dbReference>
<dbReference type="PDBsum" id="7OYA"/>
<dbReference type="PDBsum" id="7OYB"/>
<dbReference type="EMDB" id="EMD-13111"/>
<dbReference type="EMDB" id="EMD-13112"/>
<dbReference type="SMR" id="Q6P5L3"/>
<dbReference type="FunCoup" id="Q6P5L3">
    <property type="interactions" value="1996"/>
</dbReference>
<dbReference type="STRING" id="7955.ENSDARP00000105649"/>
<dbReference type="PaxDb" id="7955-ENSDARP00000105649"/>
<dbReference type="Ensembl" id="ENSDART00000121728">
    <property type="protein sequence ID" value="ENSDARP00000105649"/>
    <property type="gene ID" value="ENSDARG00000013307"/>
</dbReference>
<dbReference type="GeneID" id="406489"/>
<dbReference type="KEGG" id="dre:406489"/>
<dbReference type="AGR" id="ZFIN:ZDB-GENE-040426-2290"/>
<dbReference type="CTD" id="6143"/>
<dbReference type="ZFIN" id="ZDB-GENE-040426-2290">
    <property type="gene designation" value="rpl19"/>
</dbReference>
<dbReference type="eggNOG" id="KOG1696">
    <property type="taxonomic scope" value="Eukaryota"/>
</dbReference>
<dbReference type="HOGENOM" id="CLU_083919_0_1_1"/>
<dbReference type="InParanoid" id="Q6P5L3"/>
<dbReference type="OMA" id="QARCRKN"/>
<dbReference type="OrthoDB" id="5407653at2759"/>
<dbReference type="PhylomeDB" id="Q6P5L3"/>
<dbReference type="TreeFam" id="TF313598"/>
<dbReference type="Reactome" id="R-DRE-156827">
    <property type="pathway name" value="L13a-mediated translational silencing of Ceruloplasmin expression"/>
</dbReference>
<dbReference type="Reactome" id="R-DRE-1799339">
    <property type="pathway name" value="SRP-dependent cotranslational protein targeting to membrane"/>
</dbReference>
<dbReference type="Reactome" id="R-DRE-72689">
    <property type="pathway name" value="Formation of a pool of free 40S subunits"/>
</dbReference>
<dbReference type="Reactome" id="R-DRE-975956">
    <property type="pathway name" value="Nonsense Mediated Decay (NMD) independent of the Exon Junction Complex (EJC)"/>
</dbReference>
<dbReference type="Reactome" id="R-DRE-975957">
    <property type="pathway name" value="Nonsense Mediated Decay (NMD) enhanced by the Exon Junction Complex (EJC)"/>
</dbReference>
<dbReference type="PRO" id="PR:Q6P5L3"/>
<dbReference type="Proteomes" id="UP000000437">
    <property type="component" value="Chromosome 3"/>
</dbReference>
<dbReference type="Bgee" id="ENSDARG00000013307">
    <property type="expression patterns" value="Expressed in tail bud paraxial mesoderm and 31 other cell types or tissues"/>
</dbReference>
<dbReference type="GO" id="GO:0022625">
    <property type="term" value="C:cytosolic large ribosomal subunit"/>
    <property type="evidence" value="ECO:0000318"/>
    <property type="project" value="GO_Central"/>
</dbReference>
<dbReference type="GO" id="GO:0003723">
    <property type="term" value="F:RNA binding"/>
    <property type="evidence" value="ECO:0000318"/>
    <property type="project" value="GO_Central"/>
</dbReference>
<dbReference type="GO" id="GO:0003735">
    <property type="term" value="F:structural constituent of ribosome"/>
    <property type="evidence" value="ECO:0000318"/>
    <property type="project" value="GO_Central"/>
</dbReference>
<dbReference type="GO" id="GO:0030097">
    <property type="term" value="P:hemopoiesis"/>
    <property type="evidence" value="ECO:0000315"/>
    <property type="project" value="ZFIN"/>
</dbReference>
<dbReference type="GO" id="GO:0006412">
    <property type="term" value="P:translation"/>
    <property type="evidence" value="ECO:0007669"/>
    <property type="project" value="InterPro"/>
</dbReference>
<dbReference type="CDD" id="cd01417">
    <property type="entry name" value="Ribosomal_L19e_E"/>
    <property type="match status" value="1"/>
</dbReference>
<dbReference type="FunFam" id="1.10.1200.240:FF:000001">
    <property type="entry name" value="Ribosomal protein L19"/>
    <property type="match status" value="1"/>
</dbReference>
<dbReference type="FunFam" id="1.10.1650.10:FF:000001">
    <property type="entry name" value="Ribosomal protein L19"/>
    <property type="match status" value="1"/>
</dbReference>
<dbReference type="Gene3D" id="1.10.1200.240">
    <property type="match status" value="1"/>
</dbReference>
<dbReference type="Gene3D" id="1.10.1650.10">
    <property type="match status" value="1"/>
</dbReference>
<dbReference type="HAMAP" id="MF_01475">
    <property type="entry name" value="Ribosomal_eL19"/>
    <property type="match status" value="1"/>
</dbReference>
<dbReference type="InterPro" id="IPR035970">
    <property type="entry name" value="60S_ribosomal_eL19_sf"/>
</dbReference>
<dbReference type="InterPro" id="IPR039547">
    <property type="entry name" value="Ribosomal_eL19"/>
</dbReference>
<dbReference type="InterPro" id="IPR023638">
    <property type="entry name" value="Ribosomal_eL19_CS"/>
</dbReference>
<dbReference type="InterPro" id="IPR000196">
    <property type="entry name" value="Ribosomal_eL19_dom"/>
</dbReference>
<dbReference type="InterPro" id="IPR015972">
    <property type="entry name" value="Ribosomal_eL19_dom1"/>
</dbReference>
<dbReference type="InterPro" id="IPR033935">
    <property type="entry name" value="Ribosomal_eL19_euk"/>
</dbReference>
<dbReference type="NCBIfam" id="NF006343">
    <property type="entry name" value="PRK08570.1"/>
    <property type="match status" value="1"/>
</dbReference>
<dbReference type="PANTHER" id="PTHR10722">
    <property type="entry name" value="60S RIBOSOMAL PROTEIN L19"/>
    <property type="match status" value="1"/>
</dbReference>
<dbReference type="Pfam" id="PF01280">
    <property type="entry name" value="Ribosomal_L19e"/>
    <property type="match status" value="1"/>
</dbReference>
<dbReference type="Pfam" id="PF25476">
    <property type="entry name" value="Ribosomal_L19e_C"/>
    <property type="match status" value="1"/>
</dbReference>
<dbReference type="SMART" id="SM01416">
    <property type="entry name" value="Ribosomal_L19e"/>
    <property type="match status" value="1"/>
</dbReference>
<dbReference type="SUPFAM" id="SSF48140">
    <property type="entry name" value="Ribosomal protein L19 (L19e)"/>
    <property type="match status" value="1"/>
</dbReference>
<dbReference type="PROSITE" id="PS00526">
    <property type="entry name" value="RIBOSOMAL_L19E"/>
    <property type="match status" value="1"/>
</dbReference>
<protein>
    <recommendedName>
        <fullName evidence="3">Large ribosomal subunit protein eL19</fullName>
    </recommendedName>
    <alternativeName>
        <fullName>60S ribosomal protein L19</fullName>
    </alternativeName>
</protein>
<sequence>MSMLRLQKRLASSVLRCGKKKVWLDPNETNEIANANSRQQIRKLVKDGLIIKKPVTVHSRARCRKNTLARRKGRHMGVGKRKGTANARMPEKLCWMRRMRILRRLLRRYREAKKIDRHMYHSLYLRAKGNVFKNKRILMEHIHKLKADKARKKLLADQAEARRTKTREARKRREERQQAKKEEIIKTLSKEDETKK</sequence>
<accession>Q6P5L3</accession>
<accession>Q6DRK1</accession>